<name>NADD_SHISS</name>
<feature type="chain" id="PRO_0000310148" description="Probable nicotinate-nucleotide adenylyltransferase">
    <location>
        <begin position="1"/>
        <end position="213"/>
    </location>
</feature>
<keyword id="KW-0067">ATP-binding</keyword>
<keyword id="KW-0520">NAD</keyword>
<keyword id="KW-0547">Nucleotide-binding</keyword>
<keyword id="KW-0548">Nucleotidyltransferase</keyword>
<keyword id="KW-0662">Pyridine nucleotide biosynthesis</keyword>
<keyword id="KW-1185">Reference proteome</keyword>
<keyword id="KW-0808">Transferase</keyword>
<accession>Q3Z4F3</accession>
<evidence type="ECO:0000255" key="1">
    <source>
        <dbReference type="HAMAP-Rule" id="MF_00244"/>
    </source>
</evidence>
<sequence>MKSLQALFGGTFDPVHYGHLKPVETLANLIGLTRVTIIPNNVPPHRPQPEANSVQRKHMLELAIADKPLFTLDERELKRNAPSYTAQTLKEWRQEQGPDVPLAFIIGQDSLLTFPTWYEYETILDNAHLIVCRRPGYPLEMAQPQYQQWLEDHLTHNPEDLHLQPAGKIYLAETPWFNISATIIRERLQNGESCEDLLPEPVLTYINQQGLYR</sequence>
<comment type="function">
    <text evidence="1">Catalyzes the reversible adenylation of nicotinate mononucleotide (NaMN) to nicotinic acid adenine dinucleotide (NaAD).</text>
</comment>
<comment type="catalytic activity">
    <reaction evidence="1">
        <text>nicotinate beta-D-ribonucleotide + ATP + H(+) = deamido-NAD(+) + diphosphate</text>
        <dbReference type="Rhea" id="RHEA:22860"/>
        <dbReference type="ChEBI" id="CHEBI:15378"/>
        <dbReference type="ChEBI" id="CHEBI:30616"/>
        <dbReference type="ChEBI" id="CHEBI:33019"/>
        <dbReference type="ChEBI" id="CHEBI:57502"/>
        <dbReference type="ChEBI" id="CHEBI:58437"/>
        <dbReference type="EC" id="2.7.7.18"/>
    </reaction>
</comment>
<comment type="pathway">
    <text evidence="1">Cofactor biosynthesis; NAD(+) biosynthesis; deamido-NAD(+) from nicotinate D-ribonucleotide: step 1/1.</text>
</comment>
<comment type="similarity">
    <text evidence="1">Belongs to the NadD family.</text>
</comment>
<proteinExistence type="inferred from homology"/>
<protein>
    <recommendedName>
        <fullName evidence="1">Probable nicotinate-nucleotide adenylyltransferase</fullName>
        <ecNumber evidence="1">2.7.7.18</ecNumber>
    </recommendedName>
    <alternativeName>
        <fullName evidence="1">Deamido-NAD(+) diphosphorylase</fullName>
    </alternativeName>
    <alternativeName>
        <fullName evidence="1">Deamido-NAD(+) pyrophosphorylase</fullName>
    </alternativeName>
    <alternativeName>
        <fullName evidence="1">Nicotinate mononucleotide adenylyltransferase</fullName>
        <shortName evidence="1">NaMN adenylyltransferase</shortName>
    </alternativeName>
</protein>
<reference key="1">
    <citation type="journal article" date="2005" name="Nucleic Acids Res.">
        <title>Genome dynamics and diversity of Shigella species, the etiologic agents of bacillary dysentery.</title>
        <authorList>
            <person name="Yang F."/>
            <person name="Yang J."/>
            <person name="Zhang X."/>
            <person name="Chen L."/>
            <person name="Jiang Y."/>
            <person name="Yan Y."/>
            <person name="Tang X."/>
            <person name="Wang J."/>
            <person name="Xiong Z."/>
            <person name="Dong J."/>
            <person name="Xue Y."/>
            <person name="Zhu Y."/>
            <person name="Xu X."/>
            <person name="Sun L."/>
            <person name="Chen S."/>
            <person name="Nie H."/>
            <person name="Peng J."/>
            <person name="Xu J."/>
            <person name="Wang Y."/>
            <person name="Yuan Z."/>
            <person name="Wen Y."/>
            <person name="Yao Z."/>
            <person name="Shen Y."/>
            <person name="Qiang B."/>
            <person name="Hou Y."/>
            <person name="Yu J."/>
            <person name="Jin Q."/>
        </authorList>
    </citation>
    <scope>NUCLEOTIDE SEQUENCE [LARGE SCALE GENOMIC DNA]</scope>
    <source>
        <strain>Ss046</strain>
    </source>
</reference>
<organism>
    <name type="scientific">Shigella sonnei (strain Ss046)</name>
    <dbReference type="NCBI Taxonomy" id="300269"/>
    <lineage>
        <taxon>Bacteria</taxon>
        <taxon>Pseudomonadati</taxon>
        <taxon>Pseudomonadota</taxon>
        <taxon>Gammaproteobacteria</taxon>
        <taxon>Enterobacterales</taxon>
        <taxon>Enterobacteriaceae</taxon>
        <taxon>Shigella</taxon>
    </lineage>
</organism>
<dbReference type="EC" id="2.7.7.18" evidence="1"/>
<dbReference type="EMBL" id="CP000038">
    <property type="protein sequence ID" value="AAZ87359.1"/>
    <property type="molecule type" value="Genomic_DNA"/>
</dbReference>
<dbReference type="RefSeq" id="WP_000838889.1">
    <property type="nucleotide sequence ID" value="NC_007384.1"/>
</dbReference>
<dbReference type="SMR" id="Q3Z4F3"/>
<dbReference type="GeneID" id="93776843"/>
<dbReference type="KEGG" id="ssn:SSON_0593"/>
<dbReference type="HOGENOM" id="CLU_069765_0_0_6"/>
<dbReference type="UniPathway" id="UPA00253">
    <property type="reaction ID" value="UER00332"/>
</dbReference>
<dbReference type="Proteomes" id="UP000002529">
    <property type="component" value="Chromosome"/>
</dbReference>
<dbReference type="GO" id="GO:0005524">
    <property type="term" value="F:ATP binding"/>
    <property type="evidence" value="ECO:0007669"/>
    <property type="project" value="UniProtKB-KW"/>
</dbReference>
<dbReference type="GO" id="GO:0004515">
    <property type="term" value="F:nicotinate-nucleotide adenylyltransferase activity"/>
    <property type="evidence" value="ECO:0007669"/>
    <property type="project" value="UniProtKB-UniRule"/>
</dbReference>
<dbReference type="GO" id="GO:0009435">
    <property type="term" value="P:NAD biosynthetic process"/>
    <property type="evidence" value="ECO:0007669"/>
    <property type="project" value="UniProtKB-UniRule"/>
</dbReference>
<dbReference type="CDD" id="cd02165">
    <property type="entry name" value="NMNAT"/>
    <property type="match status" value="1"/>
</dbReference>
<dbReference type="FunFam" id="3.40.50.620:FF:000039">
    <property type="entry name" value="Probable nicotinate-nucleotide adenylyltransferase"/>
    <property type="match status" value="1"/>
</dbReference>
<dbReference type="Gene3D" id="3.40.50.620">
    <property type="entry name" value="HUPs"/>
    <property type="match status" value="1"/>
</dbReference>
<dbReference type="HAMAP" id="MF_00244">
    <property type="entry name" value="NaMN_adenylyltr"/>
    <property type="match status" value="1"/>
</dbReference>
<dbReference type="InterPro" id="IPR004821">
    <property type="entry name" value="Cyt_trans-like"/>
</dbReference>
<dbReference type="InterPro" id="IPR005248">
    <property type="entry name" value="NadD/NMNAT"/>
</dbReference>
<dbReference type="InterPro" id="IPR014729">
    <property type="entry name" value="Rossmann-like_a/b/a_fold"/>
</dbReference>
<dbReference type="NCBIfam" id="TIGR00125">
    <property type="entry name" value="cyt_tran_rel"/>
    <property type="match status" value="1"/>
</dbReference>
<dbReference type="NCBIfam" id="TIGR00482">
    <property type="entry name" value="nicotinate (nicotinamide) nucleotide adenylyltransferase"/>
    <property type="match status" value="1"/>
</dbReference>
<dbReference type="NCBIfam" id="NF000839">
    <property type="entry name" value="PRK00071.1-1"/>
    <property type="match status" value="1"/>
</dbReference>
<dbReference type="NCBIfam" id="NF000840">
    <property type="entry name" value="PRK00071.1-3"/>
    <property type="match status" value="1"/>
</dbReference>
<dbReference type="PANTHER" id="PTHR39321">
    <property type="entry name" value="NICOTINATE-NUCLEOTIDE ADENYLYLTRANSFERASE-RELATED"/>
    <property type="match status" value="1"/>
</dbReference>
<dbReference type="PANTHER" id="PTHR39321:SF3">
    <property type="entry name" value="PHOSPHOPANTETHEINE ADENYLYLTRANSFERASE"/>
    <property type="match status" value="1"/>
</dbReference>
<dbReference type="Pfam" id="PF01467">
    <property type="entry name" value="CTP_transf_like"/>
    <property type="match status" value="1"/>
</dbReference>
<dbReference type="SUPFAM" id="SSF52374">
    <property type="entry name" value="Nucleotidylyl transferase"/>
    <property type="match status" value="1"/>
</dbReference>
<gene>
    <name evidence="1" type="primary">nadD</name>
    <name type="ordered locus">SSON_0593</name>
</gene>